<proteinExistence type="inferred from homology"/>
<name>MURD_BAUCH</name>
<comment type="function">
    <text evidence="1">Cell wall formation. Catalyzes the addition of glutamate to the nucleotide precursor UDP-N-acetylmuramoyl-L-alanine (UMA).</text>
</comment>
<comment type="catalytic activity">
    <reaction evidence="1">
        <text>UDP-N-acetyl-alpha-D-muramoyl-L-alanine + D-glutamate + ATP = UDP-N-acetyl-alpha-D-muramoyl-L-alanyl-D-glutamate + ADP + phosphate + H(+)</text>
        <dbReference type="Rhea" id="RHEA:16429"/>
        <dbReference type="ChEBI" id="CHEBI:15378"/>
        <dbReference type="ChEBI" id="CHEBI:29986"/>
        <dbReference type="ChEBI" id="CHEBI:30616"/>
        <dbReference type="ChEBI" id="CHEBI:43474"/>
        <dbReference type="ChEBI" id="CHEBI:83898"/>
        <dbReference type="ChEBI" id="CHEBI:83900"/>
        <dbReference type="ChEBI" id="CHEBI:456216"/>
        <dbReference type="EC" id="6.3.2.9"/>
    </reaction>
</comment>
<comment type="pathway">
    <text evidence="1">Cell wall biogenesis; peptidoglycan biosynthesis.</text>
</comment>
<comment type="subcellular location">
    <subcellularLocation>
        <location evidence="1">Cytoplasm</location>
    </subcellularLocation>
</comment>
<comment type="similarity">
    <text evidence="1">Belongs to the MurCDEF family.</text>
</comment>
<feature type="chain" id="PRO_0000257166" description="UDP-N-acetylmuramoylalanine--D-glutamate ligase">
    <location>
        <begin position="1"/>
        <end position="446"/>
    </location>
</feature>
<feature type="binding site" evidence="1">
    <location>
        <begin position="112"/>
        <end position="118"/>
    </location>
    <ligand>
        <name>ATP</name>
        <dbReference type="ChEBI" id="CHEBI:30616"/>
    </ligand>
</feature>
<organism>
    <name type="scientific">Baumannia cicadellinicola subsp. Homalodisca coagulata</name>
    <dbReference type="NCBI Taxonomy" id="374463"/>
    <lineage>
        <taxon>Bacteria</taxon>
        <taxon>Pseudomonadati</taxon>
        <taxon>Pseudomonadota</taxon>
        <taxon>Gammaproteobacteria</taxon>
        <taxon>Candidatus Palibaumannia</taxon>
    </lineage>
</organism>
<reference key="1">
    <citation type="journal article" date="2006" name="PLoS Biol.">
        <title>Metabolic complementarity and genomics of the dual bacterial symbiosis of sharpshooters.</title>
        <authorList>
            <person name="Wu D."/>
            <person name="Daugherty S.C."/>
            <person name="Van Aken S.E."/>
            <person name="Pai G.H."/>
            <person name="Watkins K.L."/>
            <person name="Khouri H."/>
            <person name="Tallon L.J."/>
            <person name="Zaborsky J.M."/>
            <person name="Dunbar H.E."/>
            <person name="Tran P.L."/>
            <person name="Moran N.A."/>
            <person name="Eisen J.A."/>
        </authorList>
    </citation>
    <scope>NUCLEOTIDE SEQUENCE [LARGE SCALE GENOMIC DNA]</scope>
</reference>
<accession>Q1LSW4</accession>
<protein>
    <recommendedName>
        <fullName evidence="1">UDP-N-acetylmuramoylalanine--D-glutamate ligase</fullName>
        <ecNumber evidence="1">6.3.2.9</ecNumber>
    </recommendedName>
    <alternativeName>
        <fullName evidence="1">D-glutamic acid-adding enzyme</fullName>
    </alternativeName>
    <alternativeName>
        <fullName evidence="1">UDP-N-acetylmuramoyl-L-alanyl-D-glutamate synthetase</fullName>
    </alternativeName>
</protein>
<gene>
    <name evidence="1" type="primary">murD</name>
    <name type="ordered locus">BCI_0520</name>
</gene>
<keyword id="KW-0067">ATP-binding</keyword>
<keyword id="KW-0131">Cell cycle</keyword>
<keyword id="KW-0132">Cell division</keyword>
<keyword id="KW-0133">Cell shape</keyword>
<keyword id="KW-0961">Cell wall biogenesis/degradation</keyword>
<keyword id="KW-0963">Cytoplasm</keyword>
<keyword id="KW-0436">Ligase</keyword>
<keyword id="KW-0547">Nucleotide-binding</keyword>
<keyword id="KW-0573">Peptidoglycan synthesis</keyword>
<keyword id="KW-1185">Reference proteome</keyword>
<evidence type="ECO:0000255" key="1">
    <source>
        <dbReference type="HAMAP-Rule" id="MF_00639"/>
    </source>
</evidence>
<sequence>MTNYYGHNIVIIGLGITGITCVNFFRSRGITPRVMDTRYNPPQLNQLPKDIQYWLGELKIEWLLAATLIVISPGISLSHPAINTAMKCGIEIIGDVELFLREVTVPVVAITGTNGKSTVAKLVGTMANCAGLKVGVGGNIGYPVLSLLQQSHQLYVLELSSFQLETTKNLKVAVATILNISEDHMDRYPLGLQQYREAKLKIYKQAKIYIINDDDKLTLPANSTNKEYCSIIKFGIKSGHYCLGDYQGKQWLMAYGKPLLDCNEIKIIGRHNLLNALAALALAEAIAIPRQACLIALRQFSGLMHRFELVLERKGIRWINDSKATNVGSTKAALNELTVDGTLHLLLGGDGKLADFSSLQPFVQGNNIHLYCFGKDSKKLAALNQHSATITQTLSQAMHIINNQVKAGDVVLLSPACSSLDQFENFKVRGKTFTNLVFEFNDGNNN</sequence>
<dbReference type="EC" id="6.3.2.9" evidence="1"/>
<dbReference type="EMBL" id="CP000238">
    <property type="protein sequence ID" value="ABF14267.1"/>
    <property type="molecule type" value="Genomic_DNA"/>
</dbReference>
<dbReference type="RefSeq" id="WP_011520683.1">
    <property type="nucleotide sequence ID" value="NC_007984.1"/>
</dbReference>
<dbReference type="SMR" id="Q1LSW4"/>
<dbReference type="STRING" id="374463.BCI_0520"/>
<dbReference type="KEGG" id="bci:BCI_0520"/>
<dbReference type="HOGENOM" id="CLU_032540_1_0_6"/>
<dbReference type="OrthoDB" id="9809796at2"/>
<dbReference type="UniPathway" id="UPA00219"/>
<dbReference type="Proteomes" id="UP000002427">
    <property type="component" value="Chromosome"/>
</dbReference>
<dbReference type="GO" id="GO:0005737">
    <property type="term" value="C:cytoplasm"/>
    <property type="evidence" value="ECO:0007669"/>
    <property type="project" value="UniProtKB-SubCell"/>
</dbReference>
<dbReference type="GO" id="GO:0005524">
    <property type="term" value="F:ATP binding"/>
    <property type="evidence" value="ECO:0007669"/>
    <property type="project" value="UniProtKB-UniRule"/>
</dbReference>
<dbReference type="GO" id="GO:0008764">
    <property type="term" value="F:UDP-N-acetylmuramoylalanine-D-glutamate ligase activity"/>
    <property type="evidence" value="ECO:0007669"/>
    <property type="project" value="UniProtKB-UniRule"/>
</dbReference>
<dbReference type="GO" id="GO:0051301">
    <property type="term" value="P:cell division"/>
    <property type="evidence" value="ECO:0007669"/>
    <property type="project" value="UniProtKB-KW"/>
</dbReference>
<dbReference type="GO" id="GO:0071555">
    <property type="term" value="P:cell wall organization"/>
    <property type="evidence" value="ECO:0007669"/>
    <property type="project" value="UniProtKB-KW"/>
</dbReference>
<dbReference type="GO" id="GO:0009252">
    <property type="term" value="P:peptidoglycan biosynthetic process"/>
    <property type="evidence" value="ECO:0007669"/>
    <property type="project" value="UniProtKB-UniRule"/>
</dbReference>
<dbReference type="GO" id="GO:0008360">
    <property type="term" value="P:regulation of cell shape"/>
    <property type="evidence" value="ECO:0007669"/>
    <property type="project" value="UniProtKB-KW"/>
</dbReference>
<dbReference type="Gene3D" id="3.90.190.20">
    <property type="entry name" value="Mur ligase, C-terminal domain"/>
    <property type="match status" value="1"/>
</dbReference>
<dbReference type="Gene3D" id="3.40.1190.10">
    <property type="entry name" value="Mur-like, catalytic domain"/>
    <property type="match status" value="1"/>
</dbReference>
<dbReference type="Gene3D" id="3.40.50.720">
    <property type="entry name" value="NAD(P)-binding Rossmann-like Domain"/>
    <property type="match status" value="1"/>
</dbReference>
<dbReference type="HAMAP" id="MF_00639">
    <property type="entry name" value="MurD"/>
    <property type="match status" value="1"/>
</dbReference>
<dbReference type="InterPro" id="IPR036565">
    <property type="entry name" value="Mur-like_cat_sf"/>
</dbReference>
<dbReference type="InterPro" id="IPR004101">
    <property type="entry name" value="Mur_ligase_C"/>
</dbReference>
<dbReference type="InterPro" id="IPR036615">
    <property type="entry name" value="Mur_ligase_C_dom_sf"/>
</dbReference>
<dbReference type="InterPro" id="IPR013221">
    <property type="entry name" value="Mur_ligase_cen"/>
</dbReference>
<dbReference type="InterPro" id="IPR005762">
    <property type="entry name" value="MurD"/>
</dbReference>
<dbReference type="NCBIfam" id="TIGR01087">
    <property type="entry name" value="murD"/>
    <property type="match status" value="1"/>
</dbReference>
<dbReference type="PANTHER" id="PTHR43692">
    <property type="entry name" value="UDP-N-ACETYLMURAMOYLALANINE--D-GLUTAMATE LIGASE"/>
    <property type="match status" value="1"/>
</dbReference>
<dbReference type="PANTHER" id="PTHR43692:SF1">
    <property type="entry name" value="UDP-N-ACETYLMURAMOYLALANINE--D-GLUTAMATE LIGASE"/>
    <property type="match status" value="1"/>
</dbReference>
<dbReference type="Pfam" id="PF02875">
    <property type="entry name" value="Mur_ligase_C"/>
    <property type="match status" value="1"/>
</dbReference>
<dbReference type="Pfam" id="PF08245">
    <property type="entry name" value="Mur_ligase_M"/>
    <property type="match status" value="1"/>
</dbReference>
<dbReference type="Pfam" id="PF21799">
    <property type="entry name" value="MurD-like_N"/>
    <property type="match status" value="1"/>
</dbReference>
<dbReference type="SUPFAM" id="SSF51984">
    <property type="entry name" value="MurCD N-terminal domain"/>
    <property type="match status" value="1"/>
</dbReference>
<dbReference type="SUPFAM" id="SSF53623">
    <property type="entry name" value="MurD-like peptide ligases, catalytic domain"/>
    <property type="match status" value="1"/>
</dbReference>
<dbReference type="SUPFAM" id="SSF53244">
    <property type="entry name" value="MurD-like peptide ligases, peptide-binding domain"/>
    <property type="match status" value="1"/>
</dbReference>